<proteinExistence type="evidence at protein level"/>
<feature type="chain" id="PRO_0000108510" description="Transcriptional regulator MraZ">
    <location>
        <begin position="1"/>
        <end position="143"/>
    </location>
</feature>
<feature type="domain" description="SpoVT-AbrB 1" evidence="2">
    <location>
        <begin position="5"/>
        <end position="47"/>
    </location>
</feature>
<feature type="domain" description="SpoVT-AbrB 2" evidence="2">
    <location>
        <begin position="76"/>
        <end position="119"/>
    </location>
</feature>
<keyword id="KW-0963">Cytoplasm</keyword>
<keyword id="KW-0238">DNA-binding</keyword>
<keyword id="KW-1185">Reference proteome</keyword>
<keyword id="KW-0677">Repeat</keyword>
<keyword id="KW-0804">Transcription</keyword>
<keyword id="KW-0805">Transcription regulation</keyword>
<reference key="1">
    <citation type="journal article" date="1998" name="Nature">
        <title>Deciphering the biology of Mycobacterium tuberculosis from the complete genome sequence.</title>
        <authorList>
            <person name="Cole S.T."/>
            <person name="Brosch R."/>
            <person name="Parkhill J."/>
            <person name="Garnier T."/>
            <person name="Churcher C.M."/>
            <person name="Harris D.E."/>
            <person name="Gordon S.V."/>
            <person name="Eiglmeier K."/>
            <person name="Gas S."/>
            <person name="Barry C.E. III"/>
            <person name="Tekaia F."/>
            <person name="Badcock K."/>
            <person name="Basham D."/>
            <person name="Brown D."/>
            <person name="Chillingworth T."/>
            <person name="Connor R."/>
            <person name="Davies R.M."/>
            <person name="Devlin K."/>
            <person name="Feltwell T."/>
            <person name="Gentles S."/>
            <person name="Hamlin N."/>
            <person name="Holroyd S."/>
            <person name="Hornsby T."/>
            <person name="Jagels K."/>
            <person name="Krogh A."/>
            <person name="McLean J."/>
            <person name="Moule S."/>
            <person name="Murphy L.D."/>
            <person name="Oliver S."/>
            <person name="Osborne J."/>
            <person name="Quail M.A."/>
            <person name="Rajandream M.A."/>
            <person name="Rogers J."/>
            <person name="Rutter S."/>
            <person name="Seeger K."/>
            <person name="Skelton S."/>
            <person name="Squares S."/>
            <person name="Squares R."/>
            <person name="Sulston J.E."/>
            <person name="Taylor K."/>
            <person name="Whitehead S."/>
            <person name="Barrell B.G."/>
        </authorList>
    </citation>
    <scope>NUCLEOTIDE SEQUENCE [LARGE SCALE GENOMIC DNA]</scope>
    <source>
        <strain>ATCC 25618 / H37Rv</strain>
    </source>
</reference>
<reference key="2">
    <citation type="journal article" date="2008" name="BMC Syst. Biol.">
        <title>targetTB: a target identification pipeline for Mycobacterium tuberculosis through an interactome, reactome and genome-scale structural analysis.</title>
        <authorList>
            <person name="Raman K."/>
            <person name="Yeturu K."/>
            <person name="Chandra N."/>
        </authorList>
    </citation>
    <scope>IDENTIFICATION AS A DRUG TARGET [LARGE SCALE ANALYSIS]</scope>
</reference>
<reference key="3">
    <citation type="journal article" date="2011" name="Mol. Cell. Proteomics">
        <title>Proteogenomic analysis of Mycobacterium tuberculosis by high resolution mass spectrometry.</title>
        <authorList>
            <person name="Kelkar D.S."/>
            <person name="Kumar D."/>
            <person name="Kumar P."/>
            <person name="Balakrishnan L."/>
            <person name="Muthusamy B."/>
            <person name="Yadav A.K."/>
            <person name="Shrivastava P."/>
            <person name="Marimuthu A."/>
            <person name="Anand S."/>
            <person name="Sundaram H."/>
            <person name="Kingsbury R."/>
            <person name="Harsha H.C."/>
            <person name="Nair B."/>
            <person name="Prasad T.S."/>
            <person name="Chauhan D.S."/>
            <person name="Katoch K."/>
            <person name="Katoch V.M."/>
            <person name="Kumar P."/>
            <person name="Chaerkady R."/>
            <person name="Ramachandran S."/>
            <person name="Dash D."/>
            <person name="Pandey A."/>
        </authorList>
    </citation>
    <scope>IDENTIFICATION BY MASS SPECTROMETRY [LARGE SCALE ANALYSIS]</scope>
    <source>
        <strain>ATCC 25618 / H37Rv</strain>
    </source>
</reference>
<protein>
    <recommendedName>
        <fullName>Transcriptional regulator MraZ</fullName>
    </recommendedName>
</protein>
<organism>
    <name type="scientific">Mycobacterium tuberculosis (strain ATCC 25618 / H37Rv)</name>
    <dbReference type="NCBI Taxonomy" id="83332"/>
    <lineage>
        <taxon>Bacteria</taxon>
        <taxon>Bacillati</taxon>
        <taxon>Actinomycetota</taxon>
        <taxon>Actinomycetes</taxon>
        <taxon>Mycobacteriales</taxon>
        <taxon>Mycobacteriaceae</taxon>
        <taxon>Mycobacterium</taxon>
        <taxon>Mycobacterium tuberculosis complex</taxon>
    </lineage>
</organism>
<evidence type="ECO:0000255" key="1">
    <source>
        <dbReference type="HAMAP-Rule" id="MF_01008"/>
    </source>
</evidence>
<evidence type="ECO:0000255" key="2">
    <source>
        <dbReference type="PROSITE-ProRule" id="PRU01076"/>
    </source>
</evidence>
<comment type="subunit">
    <text evidence="1">Forms oligomers.</text>
</comment>
<comment type="subcellular location">
    <subcellularLocation>
        <location evidence="1">Cytoplasm</location>
        <location evidence="1">Nucleoid</location>
    </subcellularLocation>
</comment>
<comment type="miscellaneous">
    <text>Was identified as a high-confidence drug target.</text>
</comment>
<comment type="similarity">
    <text evidence="1">Belongs to the MraZ family.</text>
</comment>
<name>MRAZ_MYCTU</name>
<accession>P9WJN9</accession>
<accession>L0TAD8</accession>
<accession>O06211</accession>
<accession>P65436</accession>
<sequence>MFLGTYTPKLDDKGRLTLPAKFRDALAGGLMVTKSQDHSLAVYPRAAFEQLARRASKAPRSNPEARAFLRNLAAGTDEQHPDSQGRITLSADHRRYASLSKDCVVIGAVDYLEIWDAQAWQNYQQIHEENFSAASDEALGDIF</sequence>
<dbReference type="EMBL" id="AL123456">
    <property type="protein sequence ID" value="CCP44943.1"/>
    <property type="molecule type" value="Genomic_DNA"/>
</dbReference>
<dbReference type="PIR" id="B70581">
    <property type="entry name" value="B70581"/>
</dbReference>
<dbReference type="RefSeq" id="NP_216682.1">
    <property type="nucleotide sequence ID" value="NC_000962.3"/>
</dbReference>
<dbReference type="RefSeq" id="WP_003411225.1">
    <property type="nucleotide sequence ID" value="NZ_NVQJ01000088.1"/>
</dbReference>
<dbReference type="SMR" id="P9WJN9"/>
<dbReference type="FunCoup" id="P9WJN9">
    <property type="interactions" value="15"/>
</dbReference>
<dbReference type="STRING" id="83332.Rv2166c"/>
<dbReference type="PaxDb" id="83332-Rv2166c"/>
<dbReference type="DNASU" id="888261"/>
<dbReference type="GeneID" id="888261"/>
<dbReference type="KEGG" id="mtu:Rv2166c"/>
<dbReference type="KEGG" id="mtv:RVBD_2166c"/>
<dbReference type="TubercuList" id="Rv2166c"/>
<dbReference type="eggNOG" id="COG2001">
    <property type="taxonomic scope" value="Bacteria"/>
</dbReference>
<dbReference type="InParanoid" id="P9WJN9"/>
<dbReference type="OrthoDB" id="9807753at2"/>
<dbReference type="PhylomeDB" id="P9WJN9"/>
<dbReference type="Proteomes" id="UP000001584">
    <property type="component" value="Chromosome"/>
</dbReference>
<dbReference type="GO" id="GO:0005737">
    <property type="term" value="C:cytoplasm"/>
    <property type="evidence" value="ECO:0007669"/>
    <property type="project" value="UniProtKB-UniRule"/>
</dbReference>
<dbReference type="GO" id="GO:0009295">
    <property type="term" value="C:nucleoid"/>
    <property type="evidence" value="ECO:0007669"/>
    <property type="project" value="UniProtKB-SubCell"/>
</dbReference>
<dbReference type="GO" id="GO:0003700">
    <property type="term" value="F:DNA-binding transcription factor activity"/>
    <property type="evidence" value="ECO:0000318"/>
    <property type="project" value="GO_Central"/>
</dbReference>
<dbReference type="GO" id="GO:0000976">
    <property type="term" value="F:transcription cis-regulatory region binding"/>
    <property type="evidence" value="ECO:0000318"/>
    <property type="project" value="GO_Central"/>
</dbReference>
<dbReference type="GO" id="GO:2000143">
    <property type="term" value="P:negative regulation of DNA-templated transcription initiation"/>
    <property type="evidence" value="ECO:0000318"/>
    <property type="project" value="GO_Central"/>
</dbReference>
<dbReference type="CDD" id="cd16321">
    <property type="entry name" value="MraZ_C"/>
    <property type="match status" value="1"/>
</dbReference>
<dbReference type="CDD" id="cd16320">
    <property type="entry name" value="MraZ_N"/>
    <property type="match status" value="1"/>
</dbReference>
<dbReference type="FunFam" id="3.40.1550.20:FF:000004">
    <property type="entry name" value="Transcriptional regulator MraZ"/>
    <property type="match status" value="1"/>
</dbReference>
<dbReference type="Gene3D" id="3.40.1550.20">
    <property type="entry name" value="Transcriptional regulator MraZ domain"/>
    <property type="match status" value="1"/>
</dbReference>
<dbReference type="HAMAP" id="MF_01008">
    <property type="entry name" value="MraZ"/>
    <property type="match status" value="1"/>
</dbReference>
<dbReference type="InterPro" id="IPR003444">
    <property type="entry name" value="MraZ"/>
</dbReference>
<dbReference type="InterPro" id="IPR035644">
    <property type="entry name" value="MraZ_C"/>
</dbReference>
<dbReference type="InterPro" id="IPR020603">
    <property type="entry name" value="MraZ_dom"/>
</dbReference>
<dbReference type="InterPro" id="IPR035642">
    <property type="entry name" value="MraZ_N"/>
</dbReference>
<dbReference type="InterPro" id="IPR038619">
    <property type="entry name" value="MraZ_sf"/>
</dbReference>
<dbReference type="InterPro" id="IPR007159">
    <property type="entry name" value="SpoVT-AbrB_dom"/>
</dbReference>
<dbReference type="InterPro" id="IPR037914">
    <property type="entry name" value="SpoVT-AbrB_sf"/>
</dbReference>
<dbReference type="NCBIfam" id="TIGR00242">
    <property type="entry name" value="division/cell wall cluster transcriptional repressor MraZ"/>
    <property type="match status" value="1"/>
</dbReference>
<dbReference type="PANTHER" id="PTHR34701">
    <property type="entry name" value="TRANSCRIPTIONAL REGULATOR MRAZ"/>
    <property type="match status" value="1"/>
</dbReference>
<dbReference type="PANTHER" id="PTHR34701:SF1">
    <property type="entry name" value="TRANSCRIPTIONAL REGULATOR MRAZ"/>
    <property type="match status" value="1"/>
</dbReference>
<dbReference type="Pfam" id="PF02381">
    <property type="entry name" value="MraZ"/>
    <property type="match status" value="2"/>
</dbReference>
<dbReference type="SUPFAM" id="SSF89447">
    <property type="entry name" value="AbrB/MazE/MraZ-like"/>
    <property type="match status" value="1"/>
</dbReference>
<dbReference type="PROSITE" id="PS51740">
    <property type="entry name" value="SPOVT_ABRB"/>
    <property type="match status" value="2"/>
</dbReference>
<gene>
    <name evidence="1" type="primary">mraZ</name>
    <name type="ordered locus">Rv2166c</name>
    <name type="ORF">MTCY270.02</name>
</gene>